<gene>
    <name evidence="1" type="primary">rsmA</name>
    <name evidence="1" type="synonym">ksgA</name>
    <name type="ordered locus">OB0050</name>
</gene>
<dbReference type="EC" id="2.1.1.182" evidence="1"/>
<dbReference type="EMBL" id="BA000028">
    <property type="protein sequence ID" value="BAC12006.1"/>
    <property type="molecule type" value="Genomic_DNA"/>
</dbReference>
<dbReference type="RefSeq" id="WP_011064452.1">
    <property type="nucleotide sequence ID" value="NC_004193.1"/>
</dbReference>
<dbReference type="SMR" id="P59155"/>
<dbReference type="STRING" id="221109.gene:10732212"/>
<dbReference type="KEGG" id="oih:OB0050"/>
<dbReference type="eggNOG" id="COG0030">
    <property type="taxonomic scope" value="Bacteria"/>
</dbReference>
<dbReference type="HOGENOM" id="CLU_041220_0_0_9"/>
<dbReference type="OrthoDB" id="9814755at2"/>
<dbReference type="PhylomeDB" id="P59155"/>
<dbReference type="Proteomes" id="UP000000822">
    <property type="component" value="Chromosome"/>
</dbReference>
<dbReference type="GO" id="GO:0005829">
    <property type="term" value="C:cytosol"/>
    <property type="evidence" value="ECO:0007669"/>
    <property type="project" value="TreeGrafter"/>
</dbReference>
<dbReference type="GO" id="GO:0052908">
    <property type="term" value="F:16S rRNA (adenine(1518)-N(6)/adenine(1519)-N(6))-dimethyltransferase activity"/>
    <property type="evidence" value="ECO:0007669"/>
    <property type="project" value="UniProtKB-EC"/>
</dbReference>
<dbReference type="GO" id="GO:0003723">
    <property type="term" value="F:RNA binding"/>
    <property type="evidence" value="ECO:0007669"/>
    <property type="project" value="UniProtKB-KW"/>
</dbReference>
<dbReference type="CDD" id="cd02440">
    <property type="entry name" value="AdoMet_MTases"/>
    <property type="match status" value="1"/>
</dbReference>
<dbReference type="FunFam" id="3.40.50.150:FF:000023">
    <property type="entry name" value="Ribosomal RNA small subunit methyltransferase A"/>
    <property type="match status" value="1"/>
</dbReference>
<dbReference type="Gene3D" id="1.10.8.100">
    <property type="entry name" value="Ribosomal RNA adenine dimethylase-like, domain 2"/>
    <property type="match status" value="1"/>
</dbReference>
<dbReference type="Gene3D" id="3.40.50.150">
    <property type="entry name" value="Vaccinia Virus protein VP39"/>
    <property type="match status" value="1"/>
</dbReference>
<dbReference type="HAMAP" id="MF_00607">
    <property type="entry name" value="16SrRNA_methyltr_A"/>
    <property type="match status" value="1"/>
</dbReference>
<dbReference type="InterPro" id="IPR001737">
    <property type="entry name" value="KsgA/Erm"/>
</dbReference>
<dbReference type="InterPro" id="IPR023165">
    <property type="entry name" value="rRNA_Ade_diMease-like_C"/>
</dbReference>
<dbReference type="InterPro" id="IPR020596">
    <property type="entry name" value="rRNA_Ade_Mease_Trfase_CS"/>
</dbReference>
<dbReference type="InterPro" id="IPR020598">
    <property type="entry name" value="rRNA_Ade_methylase_Trfase_N"/>
</dbReference>
<dbReference type="InterPro" id="IPR011530">
    <property type="entry name" value="rRNA_adenine_dimethylase"/>
</dbReference>
<dbReference type="InterPro" id="IPR029063">
    <property type="entry name" value="SAM-dependent_MTases_sf"/>
</dbReference>
<dbReference type="NCBIfam" id="TIGR00755">
    <property type="entry name" value="ksgA"/>
    <property type="match status" value="1"/>
</dbReference>
<dbReference type="PANTHER" id="PTHR11727">
    <property type="entry name" value="DIMETHYLADENOSINE TRANSFERASE"/>
    <property type="match status" value="1"/>
</dbReference>
<dbReference type="PANTHER" id="PTHR11727:SF7">
    <property type="entry name" value="DIMETHYLADENOSINE TRANSFERASE-RELATED"/>
    <property type="match status" value="1"/>
</dbReference>
<dbReference type="Pfam" id="PF00398">
    <property type="entry name" value="RrnaAD"/>
    <property type="match status" value="1"/>
</dbReference>
<dbReference type="SMART" id="SM00650">
    <property type="entry name" value="rADc"/>
    <property type="match status" value="1"/>
</dbReference>
<dbReference type="SUPFAM" id="SSF53335">
    <property type="entry name" value="S-adenosyl-L-methionine-dependent methyltransferases"/>
    <property type="match status" value="1"/>
</dbReference>
<dbReference type="PROSITE" id="PS01131">
    <property type="entry name" value="RRNA_A_DIMETH"/>
    <property type="match status" value="1"/>
</dbReference>
<dbReference type="PROSITE" id="PS51689">
    <property type="entry name" value="SAM_RNA_A_N6_MT"/>
    <property type="match status" value="1"/>
</dbReference>
<comment type="function">
    <text evidence="1">Specifically dimethylates two adjacent adenosines (A1518 and A1519) in the loop of a conserved hairpin near the 3'-end of 16S rRNA in the 30S particle. May play a critical role in biogenesis of 30S subunits.</text>
</comment>
<comment type="catalytic activity">
    <reaction evidence="1">
        <text>adenosine(1518)/adenosine(1519) in 16S rRNA + 4 S-adenosyl-L-methionine = N(6)-dimethyladenosine(1518)/N(6)-dimethyladenosine(1519) in 16S rRNA + 4 S-adenosyl-L-homocysteine + 4 H(+)</text>
        <dbReference type="Rhea" id="RHEA:19609"/>
        <dbReference type="Rhea" id="RHEA-COMP:10232"/>
        <dbReference type="Rhea" id="RHEA-COMP:10233"/>
        <dbReference type="ChEBI" id="CHEBI:15378"/>
        <dbReference type="ChEBI" id="CHEBI:57856"/>
        <dbReference type="ChEBI" id="CHEBI:59789"/>
        <dbReference type="ChEBI" id="CHEBI:74411"/>
        <dbReference type="ChEBI" id="CHEBI:74493"/>
        <dbReference type="EC" id="2.1.1.182"/>
    </reaction>
</comment>
<comment type="subcellular location">
    <subcellularLocation>
        <location evidence="1">Cytoplasm</location>
    </subcellularLocation>
</comment>
<comment type="similarity">
    <text evidence="1">Belongs to the class I-like SAM-binding methyltransferase superfamily. rRNA adenine N(6)-methyltransferase family. RsmA subfamily.</text>
</comment>
<name>RSMA_OCEIH</name>
<proteinExistence type="inferred from homology"/>
<reference key="1">
    <citation type="journal article" date="2002" name="Nucleic Acids Res.">
        <title>Genome sequence of Oceanobacillus iheyensis isolated from the Iheya Ridge and its unexpected adaptive capabilities to extreme environments.</title>
        <authorList>
            <person name="Takami H."/>
            <person name="Takaki Y."/>
            <person name="Uchiyama I."/>
        </authorList>
    </citation>
    <scope>NUCLEOTIDE SEQUENCE [LARGE SCALE GENOMIC DNA]</scope>
    <source>
        <strain>DSM 14371 / CIP 107618 / JCM 11309 / KCTC 3954 / HTE831</strain>
    </source>
</reference>
<keyword id="KW-0963">Cytoplasm</keyword>
<keyword id="KW-0489">Methyltransferase</keyword>
<keyword id="KW-1185">Reference proteome</keyword>
<keyword id="KW-0694">RNA-binding</keyword>
<keyword id="KW-0698">rRNA processing</keyword>
<keyword id="KW-0949">S-adenosyl-L-methionine</keyword>
<keyword id="KW-0808">Transferase</keyword>
<protein>
    <recommendedName>
        <fullName evidence="1">Ribosomal RNA small subunit methyltransferase A</fullName>
        <ecNumber evidence="1">2.1.1.182</ecNumber>
    </recommendedName>
    <alternativeName>
        <fullName evidence="1">16S rRNA (adenine(1518)-N(6)/adenine(1519)-N(6))-dimethyltransferase</fullName>
    </alternativeName>
    <alternativeName>
        <fullName evidence="1">16S rRNA dimethyladenosine transferase</fullName>
    </alternativeName>
    <alternativeName>
        <fullName evidence="1">16S rRNA dimethylase</fullName>
    </alternativeName>
    <alternativeName>
        <fullName evidence="1">S-adenosylmethionine-6-N', N'-adenosyl(rRNA) dimethyltransferase</fullName>
    </alternativeName>
</protein>
<sequence>MTTNKYIATPSRTKDILGKYHFTFKKSLGQNFLVDVSVLQNIIRHAGITKDTAAIEIGPGIGALTEQLAIHADQVVAFEIDQRLLPILQDTLGEYSNVSVIHQDILKADVTKVIDEHFKEGQEVHVVANLPYYITTPILMKLIRDRLPVTSLTVMIQKEVADRMSGEPNSKSYGSLSLAVQYYSEAKVVMNVPKQVFMPQPNVDSSILQLTMRKQPPVEVTDEDFFFEIIQASFAQRRKTLKNNLTRFFKGVHDKEKIDHILQEAGVEGIRRGESLTMEEFAQVANTFYQYQSK</sequence>
<feature type="chain" id="PRO_0000101575" description="Ribosomal RNA small subunit methyltransferase A">
    <location>
        <begin position="1"/>
        <end position="294"/>
    </location>
</feature>
<feature type="binding site" evidence="1">
    <location>
        <position position="31"/>
    </location>
    <ligand>
        <name>S-adenosyl-L-methionine</name>
        <dbReference type="ChEBI" id="CHEBI:59789"/>
    </ligand>
</feature>
<feature type="binding site" evidence="1">
    <location>
        <position position="33"/>
    </location>
    <ligand>
        <name>S-adenosyl-L-methionine</name>
        <dbReference type="ChEBI" id="CHEBI:59789"/>
    </ligand>
</feature>
<feature type="binding site" evidence="1">
    <location>
        <position position="58"/>
    </location>
    <ligand>
        <name>S-adenosyl-L-methionine</name>
        <dbReference type="ChEBI" id="CHEBI:59789"/>
    </ligand>
</feature>
<feature type="binding site" evidence="1">
    <location>
        <position position="79"/>
    </location>
    <ligand>
        <name>S-adenosyl-L-methionine</name>
        <dbReference type="ChEBI" id="CHEBI:59789"/>
    </ligand>
</feature>
<feature type="binding site" evidence="1">
    <location>
        <position position="104"/>
    </location>
    <ligand>
        <name>S-adenosyl-L-methionine</name>
        <dbReference type="ChEBI" id="CHEBI:59789"/>
    </ligand>
</feature>
<feature type="binding site" evidence="1">
    <location>
        <position position="129"/>
    </location>
    <ligand>
        <name>S-adenosyl-L-methionine</name>
        <dbReference type="ChEBI" id="CHEBI:59789"/>
    </ligand>
</feature>
<accession>P59155</accession>
<organism>
    <name type="scientific">Oceanobacillus iheyensis (strain DSM 14371 / CIP 107618 / JCM 11309 / KCTC 3954 / HTE831)</name>
    <dbReference type="NCBI Taxonomy" id="221109"/>
    <lineage>
        <taxon>Bacteria</taxon>
        <taxon>Bacillati</taxon>
        <taxon>Bacillota</taxon>
        <taxon>Bacilli</taxon>
        <taxon>Bacillales</taxon>
        <taxon>Bacillaceae</taxon>
        <taxon>Oceanobacillus</taxon>
    </lineage>
</organism>
<evidence type="ECO:0000255" key="1">
    <source>
        <dbReference type="HAMAP-Rule" id="MF_00607"/>
    </source>
</evidence>